<protein>
    <recommendedName>
        <fullName>Nucleolar protein 12</fullName>
    </recommendedName>
</protein>
<accession>Q5RD68</accession>
<reference key="1">
    <citation type="submission" date="2004-11" db="EMBL/GenBank/DDBJ databases">
        <authorList>
            <consortium name="The German cDNA consortium"/>
        </authorList>
    </citation>
    <scope>NUCLEOTIDE SEQUENCE [LARGE SCALE MRNA]</scope>
    <source>
        <tissue>Brain cortex</tissue>
    </source>
</reference>
<organism>
    <name type="scientific">Pongo abelii</name>
    <name type="common">Sumatran orangutan</name>
    <name type="synonym">Pongo pygmaeus abelii</name>
    <dbReference type="NCBI Taxonomy" id="9601"/>
    <lineage>
        <taxon>Eukaryota</taxon>
        <taxon>Metazoa</taxon>
        <taxon>Chordata</taxon>
        <taxon>Craniata</taxon>
        <taxon>Vertebrata</taxon>
        <taxon>Euteleostomi</taxon>
        <taxon>Mammalia</taxon>
        <taxon>Eutheria</taxon>
        <taxon>Euarchontoglires</taxon>
        <taxon>Primates</taxon>
        <taxon>Haplorrhini</taxon>
        <taxon>Catarrhini</taxon>
        <taxon>Hominidae</taxon>
        <taxon>Pongo</taxon>
    </lineage>
</organism>
<proteinExistence type="evidence at transcript level"/>
<name>NOL12_PONAB</name>
<gene>
    <name type="primary">NOL12</name>
</gene>
<evidence type="ECO:0000250" key="1"/>
<evidence type="ECO:0000250" key="2">
    <source>
        <dbReference type="UniProtKB" id="Q9UGY1"/>
    </source>
</evidence>
<evidence type="ECO:0000255" key="3"/>
<evidence type="ECO:0000256" key="4">
    <source>
        <dbReference type="SAM" id="MobiDB-lite"/>
    </source>
</evidence>
<evidence type="ECO:0000305" key="5"/>
<dbReference type="EMBL" id="CR858049">
    <property type="protein sequence ID" value="CAH90289.1"/>
    <property type="molecule type" value="mRNA"/>
</dbReference>
<dbReference type="RefSeq" id="NP_001125131.1">
    <property type="nucleotide sequence ID" value="NM_001131659.1"/>
</dbReference>
<dbReference type="SMR" id="Q5RD68"/>
<dbReference type="FunCoup" id="Q5RD68">
    <property type="interactions" value="628"/>
</dbReference>
<dbReference type="STRING" id="9601.ENSPPYP00000013163"/>
<dbReference type="GeneID" id="100172016"/>
<dbReference type="KEGG" id="pon:100172016"/>
<dbReference type="CTD" id="79159"/>
<dbReference type="InParanoid" id="Q5RD68"/>
<dbReference type="OrthoDB" id="551633at2759"/>
<dbReference type="Proteomes" id="UP000001595">
    <property type="component" value="Unplaced"/>
</dbReference>
<dbReference type="GO" id="GO:0005737">
    <property type="term" value="C:cytoplasm"/>
    <property type="evidence" value="ECO:0007669"/>
    <property type="project" value="UniProtKB-SubCell"/>
</dbReference>
<dbReference type="GO" id="GO:0005730">
    <property type="term" value="C:nucleolus"/>
    <property type="evidence" value="ECO:0007669"/>
    <property type="project" value="UniProtKB-SubCell"/>
</dbReference>
<dbReference type="GO" id="GO:0019843">
    <property type="term" value="F:rRNA binding"/>
    <property type="evidence" value="ECO:0007669"/>
    <property type="project" value="UniProtKB-KW"/>
</dbReference>
<dbReference type="InterPro" id="IPR019186">
    <property type="entry name" value="Nucleolar_protein_12"/>
</dbReference>
<dbReference type="PANTHER" id="PTHR14577">
    <property type="entry name" value="NUCLEOLAR PROTEIN 12"/>
    <property type="match status" value="1"/>
</dbReference>
<dbReference type="PANTHER" id="PTHR14577:SF0">
    <property type="entry name" value="NUCLEOLAR PROTEIN 12"/>
    <property type="match status" value="1"/>
</dbReference>
<dbReference type="Pfam" id="PF09805">
    <property type="entry name" value="Nop25"/>
    <property type="match status" value="1"/>
</dbReference>
<feature type="chain" id="PRO_0000271209" description="Nucleolar protein 12">
    <location>
        <begin position="1"/>
        <end position="213"/>
    </location>
</feature>
<feature type="region of interest" description="Disordered" evidence="4">
    <location>
        <begin position="109"/>
        <end position="213"/>
    </location>
</feature>
<feature type="coiled-coil region" evidence="3">
    <location>
        <begin position="33"/>
        <end position="96"/>
    </location>
</feature>
<feature type="compositionally biased region" description="Acidic residues" evidence="4">
    <location>
        <begin position="130"/>
        <end position="139"/>
    </location>
</feature>
<feature type="compositionally biased region" description="Basic residues" evidence="4">
    <location>
        <begin position="170"/>
        <end position="182"/>
    </location>
</feature>
<comment type="function">
    <text evidence="2">Multifunctional RNA binding protein that plays a role in RNA metabolism and DNA maintenance. Participates in the resolution of DNA stress and the maintenance of genome integrity by localizing to sites of DNA insults. Also plays a role in proper nucleolar organization by limiting nucleolar size and regulating nucleolar number. Mechanistically, regulates the nucleolar levels of fibrillarin and nucleolin, two key players in pre-rRNA processing and ribosome assembly.</text>
</comment>
<comment type="subunit">
    <text evidence="1">Interacts with KIAA1191.</text>
</comment>
<comment type="subcellular location">
    <subcellularLocation>
        <location evidence="2">Nucleus</location>
        <location evidence="2">Nucleolus</location>
    </subcellularLocation>
    <subcellularLocation>
        <location evidence="2">Nucleus</location>
    </subcellularLocation>
    <subcellularLocation>
        <location evidence="2">Cytoplasm</location>
    </subcellularLocation>
</comment>
<comment type="similarity">
    <text evidence="5">Belongs to the RRP17 family.</text>
</comment>
<sequence length="213" mass="24655">MGRNKKKKRDGDDRRPRLVLSFDEEKRREYLTGFHKRKVERKKAAIEEIKQRLKEEQRKLREERHQEYLKMLAEREEALEEADELDRLVTAKTESVQYDHPNHTVTATTISDLDLSGARLLGLTPPEGGAGDESEEEASSTEKPTKALPRKSRDPLLSQRISSLTASLHAHSRKKVKRKHPRQAQDSKKPPRATRTSKAQRRRLTGKAQHSRE</sequence>
<keyword id="KW-0175">Coiled coil</keyword>
<keyword id="KW-0963">Cytoplasm</keyword>
<keyword id="KW-0539">Nucleus</keyword>
<keyword id="KW-1185">Reference proteome</keyword>
<keyword id="KW-0694">RNA-binding</keyword>
<keyword id="KW-0699">rRNA-binding</keyword>